<evidence type="ECO:0000255" key="1">
    <source>
        <dbReference type="HAMAP-Rule" id="MF_01227"/>
    </source>
</evidence>
<proteinExistence type="inferred from homology"/>
<sequence length="536" mass="59805">MSKFVFVTGGVVSSIGKGIVAASLGRLLKSRGYSVSILKLDPYLNVDPGTMSPFQHGEVFVTEDGAETDLDLGHYERFTDTAMTRLNSVTTGSIYQAVINKERRGSYNGGTVQVIPHITGEIRERIHRVASNSNADIVITEIGGTVGDIESLPFLEAIREFKNDVNKNDVTYIHVTLLPYIKTSGEIKTKPTQHSVKELRSIGIQPDLLVCRSDKEINDSLKRKLSGFCGVNLNCVIEALDADSIYSVPLSLKKEGLCKETLRCLDLEDKECDLESWEKIIHNLRNPGNPIKVALVGKYIELGDAYLSVVEALRHACIEQKAFLDLHWVSAEMIEEKSAEEYLHDVDAIVVPGGFGNRGVNGKIASIKFAREKKIPFLGLCLGMQCAVIEWARNVVQLPGASSSELDPESENPVIHLLPEQEDIVDLGGTMRLGVYPCRLQKNTTGKELYNEDVIYERHRHRYEFNNFYKQIFVDSGYKISGTSPDGRLVELIELVNHPYFLACQYHPEFLSRPGKPHPLFKGLIKASREKLEQSK</sequence>
<comment type="function">
    <text evidence="1">Catalyzes the ATP-dependent amination of UTP to CTP with either L-glutamine or ammonia as the source of nitrogen. Regulates intracellular CTP levels through interactions with the four ribonucleotide triphosphates.</text>
</comment>
<comment type="catalytic activity">
    <reaction evidence="1">
        <text>UTP + L-glutamine + ATP + H2O = CTP + L-glutamate + ADP + phosphate + 2 H(+)</text>
        <dbReference type="Rhea" id="RHEA:26426"/>
        <dbReference type="ChEBI" id="CHEBI:15377"/>
        <dbReference type="ChEBI" id="CHEBI:15378"/>
        <dbReference type="ChEBI" id="CHEBI:29985"/>
        <dbReference type="ChEBI" id="CHEBI:30616"/>
        <dbReference type="ChEBI" id="CHEBI:37563"/>
        <dbReference type="ChEBI" id="CHEBI:43474"/>
        <dbReference type="ChEBI" id="CHEBI:46398"/>
        <dbReference type="ChEBI" id="CHEBI:58359"/>
        <dbReference type="ChEBI" id="CHEBI:456216"/>
        <dbReference type="EC" id="6.3.4.2"/>
    </reaction>
</comment>
<comment type="catalytic activity">
    <reaction evidence="1">
        <text>L-glutamine + H2O = L-glutamate + NH4(+)</text>
        <dbReference type="Rhea" id="RHEA:15889"/>
        <dbReference type="ChEBI" id="CHEBI:15377"/>
        <dbReference type="ChEBI" id="CHEBI:28938"/>
        <dbReference type="ChEBI" id="CHEBI:29985"/>
        <dbReference type="ChEBI" id="CHEBI:58359"/>
    </reaction>
</comment>
<comment type="catalytic activity">
    <reaction evidence="1">
        <text>UTP + NH4(+) + ATP = CTP + ADP + phosphate + 2 H(+)</text>
        <dbReference type="Rhea" id="RHEA:16597"/>
        <dbReference type="ChEBI" id="CHEBI:15378"/>
        <dbReference type="ChEBI" id="CHEBI:28938"/>
        <dbReference type="ChEBI" id="CHEBI:30616"/>
        <dbReference type="ChEBI" id="CHEBI:37563"/>
        <dbReference type="ChEBI" id="CHEBI:43474"/>
        <dbReference type="ChEBI" id="CHEBI:46398"/>
        <dbReference type="ChEBI" id="CHEBI:456216"/>
    </reaction>
</comment>
<comment type="activity regulation">
    <text evidence="1">Allosterically activated by GTP, when glutamine is the substrate; GTP has no effect on the reaction when ammonia is the substrate. The allosteric effector GTP functions by stabilizing the protein conformation that binds the tetrahedral intermediate(s) formed during glutamine hydrolysis. Inhibited by the product CTP, via allosteric rather than competitive inhibition.</text>
</comment>
<comment type="pathway">
    <text evidence="1">Pyrimidine metabolism; CTP biosynthesis via de novo pathway; CTP from UDP: step 2/2.</text>
</comment>
<comment type="subunit">
    <text evidence="1">Homotetramer.</text>
</comment>
<comment type="miscellaneous">
    <text evidence="1">CTPSs have evolved a hybrid strategy for distinguishing between UTP and CTP. The overlapping regions of the product feedback inhibitory and substrate sites recognize a common feature in both compounds, the triphosphate moiety. To differentiate isosteric substrate and product pyrimidine rings, an additional pocket far from the expected kinase/ligase catalytic site, specifically recognizes the cytosine and ribose portions of the product inhibitor.</text>
</comment>
<comment type="similarity">
    <text evidence="1">Belongs to the CTP synthase family.</text>
</comment>
<reference key="1">
    <citation type="journal article" date="2007" name="PLoS Genet.">
        <title>Patterns and implications of gene gain and loss in the evolution of Prochlorococcus.</title>
        <authorList>
            <person name="Kettler G.C."/>
            <person name="Martiny A.C."/>
            <person name="Huang K."/>
            <person name="Zucker J."/>
            <person name="Coleman M.L."/>
            <person name="Rodrigue S."/>
            <person name="Chen F."/>
            <person name="Lapidus A."/>
            <person name="Ferriera S."/>
            <person name="Johnson J."/>
            <person name="Steglich C."/>
            <person name="Church G.M."/>
            <person name="Richardson P."/>
            <person name="Chisholm S.W."/>
        </authorList>
    </citation>
    <scope>NUCLEOTIDE SEQUENCE [LARGE SCALE GENOMIC DNA]</scope>
    <source>
        <strain>MIT 9515</strain>
    </source>
</reference>
<accession>A2BZ76</accession>
<keyword id="KW-0067">ATP-binding</keyword>
<keyword id="KW-0315">Glutamine amidotransferase</keyword>
<keyword id="KW-0436">Ligase</keyword>
<keyword id="KW-0460">Magnesium</keyword>
<keyword id="KW-0479">Metal-binding</keyword>
<keyword id="KW-0547">Nucleotide-binding</keyword>
<keyword id="KW-0665">Pyrimidine biosynthesis</keyword>
<feature type="chain" id="PRO_1000139526" description="CTP synthase">
    <location>
        <begin position="1"/>
        <end position="536"/>
    </location>
</feature>
<feature type="domain" description="Glutamine amidotransferase type-1" evidence="1">
    <location>
        <begin position="292"/>
        <end position="534"/>
    </location>
</feature>
<feature type="region of interest" description="Amidoligase domain" evidence="1">
    <location>
        <begin position="1"/>
        <end position="267"/>
    </location>
</feature>
<feature type="active site" description="Nucleophile; for glutamine hydrolysis" evidence="1">
    <location>
        <position position="381"/>
    </location>
</feature>
<feature type="active site" evidence="1">
    <location>
        <position position="507"/>
    </location>
</feature>
<feature type="active site" evidence="1">
    <location>
        <position position="509"/>
    </location>
</feature>
<feature type="binding site" evidence="1">
    <location>
        <position position="13"/>
    </location>
    <ligand>
        <name>CTP</name>
        <dbReference type="ChEBI" id="CHEBI:37563"/>
        <note>allosteric inhibitor</note>
    </ligand>
</feature>
<feature type="binding site" evidence="1">
    <location>
        <position position="13"/>
    </location>
    <ligand>
        <name>UTP</name>
        <dbReference type="ChEBI" id="CHEBI:46398"/>
    </ligand>
</feature>
<feature type="binding site" evidence="1">
    <location>
        <begin position="14"/>
        <end position="19"/>
    </location>
    <ligand>
        <name>ATP</name>
        <dbReference type="ChEBI" id="CHEBI:30616"/>
    </ligand>
</feature>
<feature type="binding site" evidence="1">
    <location>
        <position position="71"/>
    </location>
    <ligand>
        <name>ATP</name>
        <dbReference type="ChEBI" id="CHEBI:30616"/>
    </ligand>
</feature>
<feature type="binding site" evidence="1">
    <location>
        <position position="71"/>
    </location>
    <ligand>
        <name>Mg(2+)</name>
        <dbReference type="ChEBI" id="CHEBI:18420"/>
    </ligand>
</feature>
<feature type="binding site" evidence="1">
    <location>
        <position position="141"/>
    </location>
    <ligand>
        <name>Mg(2+)</name>
        <dbReference type="ChEBI" id="CHEBI:18420"/>
    </ligand>
</feature>
<feature type="binding site" evidence="1">
    <location>
        <begin position="148"/>
        <end position="150"/>
    </location>
    <ligand>
        <name>CTP</name>
        <dbReference type="ChEBI" id="CHEBI:37563"/>
        <note>allosteric inhibitor</note>
    </ligand>
</feature>
<feature type="binding site" evidence="1">
    <location>
        <begin position="188"/>
        <end position="193"/>
    </location>
    <ligand>
        <name>CTP</name>
        <dbReference type="ChEBI" id="CHEBI:37563"/>
        <note>allosteric inhibitor</note>
    </ligand>
</feature>
<feature type="binding site" evidence="1">
    <location>
        <begin position="188"/>
        <end position="193"/>
    </location>
    <ligand>
        <name>UTP</name>
        <dbReference type="ChEBI" id="CHEBI:46398"/>
    </ligand>
</feature>
<feature type="binding site" evidence="1">
    <location>
        <position position="224"/>
    </location>
    <ligand>
        <name>CTP</name>
        <dbReference type="ChEBI" id="CHEBI:37563"/>
        <note>allosteric inhibitor</note>
    </ligand>
</feature>
<feature type="binding site" evidence="1">
    <location>
        <position position="224"/>
    </location>
    <ligand>
        <name>UTP</name>
        <dbReference type="ChEBI" id="CHEBI:46398"/>
    </ligand>
</feature>
<feature type="binding site" evidence="1">
    <location>
        <position position="354"/>
    </location>
    <ligand>
        <name>L-glutamine</name>
        <dbReference type="ChEBI" id="CHEBI:58359"/>
    </ligand>
</feature>
<feature type="binding site" evidence="1">
    <location>
        <begin position="382"/>
        <end position="385"/>
    </location>
    <ligand>
        <name>L-glutamine</name>
        <dbReference type="ChEBI" id="CHEBI:58359"/>
    </ligand>
</feature>
<feature type="binding site" evidence="1">
    <location>
        <position position="405"/>
    </location>
    <ligand>
        <name>L-glutamine</name>
        <dbReference type="ChEBI" id="CHEBI:58359"/>
    </ligand>
</feature>
<feature type="binding site" evidence="1">
    <location>
        <position position="462"/>
    </location>
    <ligand>
        <name>L-glutamine</name>
        <dbReference type="ChEBI" id="CHEBI:58359"/>
    </ligand>
</feature>
<name>PYRG_PROM5</name>
<gene>
    <name evidence="1" type="primary">pyrG</name>
    <name type="ordered locus">P9515_18801</name>
</gene>
<protein>
    <recommendedName>
        <fullName evidence="1">CTP synthase</fullName>
        <ecNumber evidence="1">6.3.4.2</ecNumber>
    </recommendedName>
    <alternativeName>
        <fullName evidence="1">Cytidine 5'-triphosphate synthase</fullName>
    </alternativeName>
    <alternativeName>
        <fullName evidence="1">Cytidine triphosphate synthetase</fullName>
        <shortName evidence="1">CTP synthetase</shortName>
        <shortName evidence="1">CTPS</shortName>
    </alternativeName>
    <alternativeName>
        <fullName evidence="1">UTP--ammonia ligase</fullName>
    </alternativeName>
</protein>
<organism>
    <name type="scientific">Prochlorococcus marinus (strain MIT 9515)</name>
    <dbReference type="NCBI Taxonomy" id="167542"/>
    <lineage>
        <taxon>Bacteria</taxon>
        <taxon>Bacillati</taxon>
        <taxon>Cyanobacteriota</taxon>
        <taxon>Cyanophyceae</taxon>
        <taxon>Synechococcales</taxon>
        <taxon>Prochlorococcaceae</taxon>
        <taxon>Prochlorococcus</taxon>
    </lineage>
</organism>
<dbReference type="EC" id="6.3.4.2" evidence="1"/>
<dbReference type="EMBL" id="CP000552">
    <property type="protein sequence ID" value="ABM73087.1"/>
    <property type="molecule type" value="Genomic_DNA"/>
</dbReference>
<dbReference type="RefSeq" id="WP_011821171.1">
    <property type="nucleotide sequence ID" value="NC_008817.1"/>
</dbReference>
<dbReference type="SMR" id="A2BZ76"/>
<dbReference type="STRING" id="167542.P9515_18801"/>
<dbReference type="MEROPS" id="C26.964"/>
<dbReference type="GeneID" id="60201447"/>
<dbReference type="KEGG" id="pmc:P9515_18801"/>
<dbReference type="eggNOG" id="COG0504">
    <property type="taxonomic scope" value="Bacteria"/>
</dbReference>
<dbReference type="HOGENOM" id="CLU_011675_5_0_3"/>
<dbReference type="OrthoDB" id="9801107at2"/>
<dbReference type="UniPathway" id="UPA00159">
    <property type="reaction ID" value="UER00277"/>
</dbReference>
<dbReference type="Proteomes" id="UP000001589">
    <property type="component" value="Chromosome"/>
</dbReference>
<dbReference type="GO" id="GO:0005829">
    <property type="term" value="C:cytosol"/>
    <property type="evidence" value="ECO:0007669"/>
    <property type="project" value="TreeGrafter"/>
</dbReference>
<dbReference type="GO" id="GO:0005524">
    <property type="term" value="F:ATP binding"/>
    <property type="evidence" value="ECO:0007669"/>
    <property type="project" value="UniProtKB-KW"/>
</dbReference>
<dbReference type="GO" id="GO:0003883">
    <property type="term" value="F:CTP synthase activity"/>
    <property type="evidence" value="ECO:0007669"/>
    <property type="project" value="UniProtKB-UniRule"/>
</dbReference>
<dbReference type="GO" id="GO:0004359">
    <property type="term" value="F:glutaminase activity"/>
    <property type="evidence" value="ECO:0007669"/>
    <property type="project" value="RHEA"/>
</dbReference>
<dbReference type="GO" id="GO:0042802">
    <property type="term" value="F:identical protein binding"/>
    <property type="evidence" value="ECO:0007669"/>
    <property type="project" value="TreeGrafter"/>
</dbReference>
<dbReference type="GO" id="GO:0046872">
    <property type="term" value="F:metal ion binding"/>
    <property type="evidence" value="ECO:0007669"/>
    <property type="project" value="UniProtKB-KW"/>
</dbReference>
<dbReference type="GO" id="GO:0044210">
    <property type="term" value="P:'de novo' CTP biosynthetic process"/>
    <property type="evidence" value="ECO:0007669"/>
    <property type="project" value="UniProtKB-UniRule"/>
</dbReference>
<dbReference type="GO" id="GO:0019856">
    <property type="term" value="P:pyrimidine nucleobase biosynthetic process"/>
    <property type="evidence" value="ECO:0007669"/>
    <property type="project" value="TreeGrafter"/>
</dbReference>
<dbReference type="CDD" id="cd03113">
    <property type="entry name" value="CTPS_N"/>
    <property type="match status" value="1"/>
</dbReference>
<dbReference type="CDD" id="cd01746">
    <property type="entry name" value="GATase1_CTP_Synthase"/>
    <property type="match status" value="1"/>
</dbReference>
<dbReference type="FunFam" id="3.40.50.300:FF:000009">
    <property type="entry name" value="CTP synthase"/>
    <property type="match status" value="1"/>
</dbReference>
<dbReference type="FunFam" id="3.40.50.880:FF:000002">
    <property type="entry name" value="CTP synthase"/>
    <property type="match status" value="1"/>
</dbReference>
<dbReference type="Gene3D" id="3.40.50.880">
    <property type="match status" value="1"/>
</dbReference>
<dbReference type="Gene3D" id="3.40.50.300">
    <property type="entry name" value="P-loop containing nucleotide triphosphate hydrolases"/>
    <property type="match status" value="1"/>
</dbReference>
<dbReference type="HAMAP" id="MF_01227">
    <property type="entry name" value="PyrG"/>
    <property type="match status" value="1"/>
</dbReference>
<dbReference type="InterPro" id="IPR029062">
    <property type="entry name" value="Class_I_gatase-like"/>
</dbReference>
<dbReference type="InterPro" id="IPR004468">
    <property type="entry name" value="CTP_synthase"/>
</dbReference>
<dbReference type="InterPro" id="IPR017456">
    <property type="entry name" value="CTP_synthase_N"/>
</dbReference>
<dbReference type="InterPro" id="IPR017926">
    <property type="entry name" value="GATASE"/>
</dbReference>
<dbReference type="InterPro" id="IPR033828">
    <property type="entry name" value="GATase1_CTP_Synthase"/>
</dbReference>
<dbReference type="InterPro" id="IPR027417">
    <property type="entry name" value="P-loop_NTPase"/>
</dbReference>
<dbReference type="NCBIfam" id="NF003792">
    <property type="entry name" value="PRK05380.1"/>
    <property type="match status" value="1"/>
</dbReference>
<dbReference type="NCBIfam" id="TIGR00337">
    <property type="entry name" value="PyrG"/>
    <property type="match status" value="1"/>
</dbReference>
<dbReference type="PANTHER" id="PTHR11550">
    <property type="entry name" value="CTP SYNTHASE"/>
    <property type="match status" value="1"/>
</dbReference>
<dbReference type="PANTHER" id="PTHR11550:SF0">
    <property type="entry name" value="CTP SYNTHASE-RELATED"/>
    <property type="match status" value="1"/>
</dbReference>
<dbReference type="Pfam" id="PF06418">
    <property type="entry name" value="CTP_synth_N"/>
    <property type="match status" value="1"/>
</dbReference>
<dbReference type="Pfam" id="PF00117">
    <property type="entry name" value="GATase"/>
    <property type="match status" value="1"/>
</dbReference>
<dbReference type="SUPFAM" id="SSF52317">
    <property type="entry name" value="Class I glutamine amidotransferase-like"/>
    <property type="match status" value="1"/>
</dbReference>
<dbReference type="SUPFAM" id="SSF52540">
    <property type="entry name" value="P-loop containing nucleoside triphosphate hydrolases"/>
    <property type="match status" value="1"/>
</dbReference>
<dbReference type="PROSITE" id="PS51273">
    <property type="entry name" value="GATASE_TYPE_1"/>
    <property type="match status" value="1"/>
</dbReference>